<geneLocation type="mitochondrion"/>
<protein>
    <recommendedName>
        <fullName>Cytochrome b</fullName>
    </recommendedName>
    <alternativeName>
        <fullName>Complex III subunit 3</fullName>
    </alternativeName>
    <alternativeName>
        <fullName>Complex III subunit III</fullName>
    </alternativeName>
    <alternativeName>
        <fullName>Cytochrome b-c1 complex subunit 3</fullName>
    </alternativeName>
    <alternativeName>
        <fullName>Ubiquinol-cytochrome-c reductase complex cytochrome b subunit</fullName>
    </alternativeName>
</protein>
<sequence>MAIRKSQVYLSTVNSYLIDSPQPSTINYWYNTGSLTGLCLVIQIASGIFTAMHYSSHIDLAFASVEHIMRDVNYGYLIRYIHANGASFFFVCMYGHIGKALYYGSYKSPRVLVWVIGVIIFITTMATAFTGYCCVYGQMSHWGATVITNTLSAIPFIGNDLVPFIWGSFSVSNPTIQRFFALHYLCPFILAALVVMHLMALHVHGSTNPLGISSNIDRLPFHGYFVFKDLVTVFVFLLIFSTFVFFSPNTLGHPDNYIPGNPLVTPASIVPEWYTLPFYAILRSIPDKLGGVIAMFGSILITLVLPVTDRSVIKGNTFKIFSKTLYFTFTYNFILLGQLGQLHVEVPFIEMGQIATFNYFTYFIVLVPLVSTLENILFYIGRVTTK</sequence>
<comment type="function">
    <text evidence="3">Component of the ubiquinol-cytochrome c reductase complex (complex III or cytochrome b-c1 complex) that is part of the mitochondrial respiratory chain. The b-c1 complex mediates electron transfer from ubiquinol to cytochrome c. Contributes to the generation of a proton gradient across the mitochondrial membrane that is then used for ATP synthesis.</text>
</comment>
<comment type="cofactor">
    <cofactor evidence="3">
        <name>heme b</name>
        <dbReference type="ChEBI" id="CHEBI:60344"/>
    </cofactor>
    <text evidence="3">Binds 2 heme b groups non-covalently.</text>
</comment>
<comment type="subunit">
    <text evidence="3">Fungal cytochrome b-c1 complex contains 10 subunits; 3 respiratory subunits, 2 core proteins and 5 low-molecular weight proteins. Cytochrome b-c1 complex is a homodimer.</text>
</comment>
<comment type="subcellular location">
    <subcellularLocation>
        <location evidence="3">Mitochondrion inner membrane</location>
        <topology evidence="3">Multi-pass membrane protein</topology>
    </subcellularLocation>
</comment>
<comment type="miscellaneous">
    <text evidence="1">Heme 1 (or BL or b562) is low-potential and absorbs at about 562 nm, and heme 2 (or BH or b566) is high-potential and absorbs at about 566 nm.</text>
</comment>
<comment type="similarity">
    <text evidence="4 5">Belongs to the cytochrome b family.</text>
</comment>
<comment type="caution">
    <text evidence="3">The protein contains only eight transmembrane helices, not nine as predicted by bioinformatics tools.</text>
</comment>
<keyword id="KW-0249">Electron transport</keyword>
<keyword id="KW-0349">Heme</keyword>
<keyword id="KW-0408">Iron</keyword>
<keyword id="KW-0472">Membrane</keyword>
<keyword id="KW-0479">Metal-binding</keyword>
<keyword id="KW-0496">Mitochondrion</keyword>
<keyword id="KW-0999">Mitochondrion inner membrane</keyword>
<keyword id="KW-0679">Respiratory chain</keyword>
<keyword id="KW-0812">Transmembrane</keyword>
<keyword id="KW-1133">Transmembrane helix</keyword>
<keyword id="KW-0813">Transport</keyword>
<keyword id="KW-0830">Ubiquinone</keyword>
<accession>Q36507</accession>
<feature type="chain" id="PRO_0000061753" description="Cytochrome b">
    <location>
        <begin position="1"/>
        <end position="386"/>
    </location>
</feature>
<feature type="transmembrane region" description="Helical" evidence="3">
    <location>
        <begin position="32"/>
        <end position="52"/>
    </location>
</feature>
<feature type="transmembrane region" description="Helical" evidence="3">
    <location>
        <begin position="76"/>
        <end position="98"/>
    </location>
</feature>
<feature type="transmembrane region" description="Helical" evidence="3">
    <location>
        <begin position="113"/>
        <end position="133"/>
    </location>
</feature>
<feature type="transmembrane region" description="Helical" evidence="3">
    <location>
        <begin position="179"/>
        <end position="199"/>
    </location>
</feature>
<feature type="transmembrane region" description="Helical" evidence="3">
    <location>
        <begin position="225"/>
        <end position="245"/>
    </location>
</feature>
<feature type="transmembrane region" description="Helical" evidence="3">
    <location>
        <begin position="289"/>
        <end position="309"/>
    </location>
</feature>
<feature type="transmembrane region" description="Helical" evidence="3">
    <location>
        <begin position="321"/>
        <end position="341"/>
    </location>
</feature>
<feature type="transmembrane region" description="Helical" evidence="3">
    <location>
        <begin position="348"/>
        <end position="368"/>
    </location>
</feature>
<feature type="binding site" description="axial binding residue" evidence="5">
    <location>
        <position position="82"/>
    </location>
    <ligand>
        <name>heme b</name>
        <dbReference type="ChEBI" id="CHEBI:60344"/>
        <label>b562</label>
    </ligand>
    <ligandPart>
        <name>Fe</name>
        <dbReference type="ChEBI" id="CHEBI:18248"/>
    </ligandPart>
</feature>
<feature type="binding site" description="axial binding residue" evidence="5">
    <location>
        <position position="96"/>
    </location>
    <ligand>
        <name>heme b</name>
        <dbReference type="ChEBI" id="CHEBI:60344"/>
        <label>b566</label>
    </ligand>
    <ligandPart>
        <name>Fe</name>
        <dbReference type="ChEBI" id="CHEBI:18248"/>
    </ligandPart>
</feature>
<feature type="binding site" description="axial binding residue" evidence="5">
    <location>
        <position position="183"/>
    </location>
    <ligand>
        <name>heme b</name>
        <dbReference type="ChEBI" id="CHEBI:60344"/>
        <label>b562</label>
    </ligand>
    <ligandPart>
        <name>Fe</name>
        <dbReference type="ChEBI" id="CHEBI:18248"/>
    </ligandPart>
</feature>
<feature type="binding site" description="axial binding residue" evidence="5">
    <location>
        <position position="197"/>
    </location>
    <ligand>
        <name>heme b</name>
        <dbReference type="ChEBI" id="CHEBI:60344"/>
        <label>b566</label>
    </ligand>
    <ligandPart>
        <name>Fe</name>
        <dbReference type="ChEBI" id="CHEBI:18248"/>
    </ligandPart>
</feature>
<feature type="binding site" evidence="2">
    <location>
        <position position="202"/>
    </location>
    <ligand>
        <name>a ubiquinone</name>
        <dbReference type="ChEBI" id="CHEBI:16389"/>
    </ligand>
</feature>
<dbReference type="EMBL" id="X66593">
    <property type="protein sequence ID" value="CAA47155.1"/>
    <property type="molecule type" value="Genomic_DNA"/>
</dbReference>
<dbReference type="SMR" id="Q36507"/>
<dbReference type="GO" id="GO:0005743">
    <property type="term" value="C:mitochondrial inner membrane"/>
    <property type="evidence" value="ECO:0007669"/>
    <property type="project" value="UniProtKB-SubCell"/>
</dbReference>
<dbReference type="GO" id="GO:0045275">
    <property type="term" value="C:respiratory chain complex III"/>
    <property type="evidence" value="ECO:0007669"/>
    <property type="project" value="InterPro"/>
</dbReference>
<dbReference type="GO" id="GO:0046872">
    <property type="term" value="F:metal ion binding"/>
    <property type="evidence" value="ECO:0007669"/>
    <property type="project" value="UniProtKB-KW"/>
</dbReference>
<dbReference type="GO" id="GO:0008121">
    <property type="term" value="F:ubiquinol-cytochrome-c reductase activity"/>
    <property type="evidence" value="ECO:0007669"/>
    <property type="project" value="InterPro"/>
</dbReference>
<dbReference type="GO" id="GO:0006122">
    <property type="term" value="P:mitochondrial electron transport, ubiquinol to cytochrome c"/>
    <property type="evidence" value="ECO:0007669"/>
    <property type="project" value="TreeGrafter"/>
</dbReference>
<dbReference type="CDD" id="cd00290">
    <property type="entry name" value="cytochrome_b_C"/>
    <property type="match status" value="1"/>
</dbReference>
<dbReference type="CDD" id="cd00284">
    <property type="entry name" value="Cytochrome_b_N"/>
    <property type="match status" value="1"/>
</dbReference>
<dbReference type="Gene3D" id="1.20.810.10">
    <property type="entry name" value="Cytochrome Bc1 Complex, Chain C"/>
    <property type="match status" value="1"/>
</dbReference>
<dbReference type="InterPro" id="IPR005798">
    <property type="entry name" value="Cyt_b/b6_C"/>
</dbReference>
<dbReference type="InterPro" id="IPR036150">
    <property type="entry name" value="Cyt_b/b6_C_sf"/>
</dbReference>
<dbReference type="InterPro" id="IPR005797">
    <property type="entry name" value="Cyt_b/b6_N"/>
</dbReference>
<dbReference type="InterPro" id="IPR027387">
    <property type="entry name" value="Cytb/b6-like_sf"/>
</dbReference>
<dbReference type="InterPro" id="IPR030689">
    <property type="entry name" value="Cytochrome_b"/>
</dbReference>
<dbReference type="InterPro" id="IPR048260">
    <property type="entry name" value="Cytochrome_b_C_euk/bac"/>
</dbReference>
<dbReference type="InterPro" id="IPR048259">
    <property type="entry name" value="Cytochrome_b_N_euk/bac"/>
</dbReference>
<dbReference type="InterPro" id="IPR016174">
    <property type="entry name" value="Di-haem_cyt_TM"/>
</dbReference>
<dbReference type="PANTHER" id="PTHR19271">
    <property type="entry name" value="CYTOCHROME B"/>
    <property type="match status" value="1"/>
</dbReference>
<dbReference type="PANTHER" id="PTHR19271:SF16">
    <property type="entry name" value="CYTOCHROME B"/>
    <property type="match status" value="1"/>
</dbReference>
<dbReference type="Pfam" id="PF00032">
    <property type="entry name" value="Cytochrom_B_C"/>
    <property type="match status" value="1"/>
</dbReference>
<dbReference type="Pfam" id="PF00033">
    <property type="entry name" value="Cytochrome_B"/>
    <property type="match status" value="1"/>
</dbReference>
<dbReference type="PIRSF" id="PIRSF038885">
    <property type="entry name" value="COB"/>
    <property type="match status" value="1"/>
</dbReference>
<dbReference type="SUPFAM" id="SSF81648">
    <property type="entry name" value="a domain/subunit of cytochrome bc1 complex (Ubiquinol-cytochrome c reductase)"/>
    <property type="match status" value="1"/>
</dbReference>
<dbReference type="SUPFAM" id="SSF81342">
    <property type="entry name" value="Transmembrane di-heme cytochromes"/>
    <property type="match status" value="1"/>
</dbReference>
<dbReference type="PROSITE" id="PS51003">
    <property type="entry name" value="CYTB_CTER"/>
    <property type="match status" value="1"/>
</dbReference>
<dbReference type="PROSITE" id="PS51002">
    <property type="entry name" value="CYTB_NTER"/>
    <property type="match status" value="1"/>
</dbReference>
<proteinExistence type="inferred from homology"/>
<name>CYB_WICPI</name>
<gene>
    <name type="primary">COB</name>
    <name type="synonym">CYTB</name>
</gene>
<evidence type="ECO:0000250" key="1"/>
<evidence type="ECO:0000250" key="2">
    <source>
        <dbReference type="UniProtKB" id="P00157"/>
    </source>
</evidence>
<evidence type="ECO:0000250" key="3">
    <source>
        <dbReference type="UniProtKB" id="P00163"/>
    </source>
</evidence>
<evidence type="ECO:0000255" key="4">
    <source>
        <dbReference type="PROSITE-ProRule" id="PRU00967"/>
    </source>
</evidence>
<evidence type="ECO:0000255" key="5">
    <source>
        <dbReference type="PROSITE-ProRule" id="PRU00968"/>
    </source>
</evidence>
<organism>
    <name type="scientific">Wickerhamomyces pijperi</name>
    <name type="common">Yeast</name>
    <name type="synonym">Pichia pijperi</name>
    <dbReference type="NCBI Taxonomy" id="599730"/>
    <lineage>
        <taxon>Eukaryota</taxon>
        <taxon>Fungi</taxon>
        <taxon>Dikarya</taxon>
        <taxon>Ascomycota</taxon>
        <taxon>Saccharomycotina</taxon>
        <taxon>Saccharomycetes</taxon>
        <taxon>Phaffomycetales</taxon>
        <taxon>Wickerhamomycetaceae</taxon>
        <taxon>Wickerhamomyces</taxon>
    </lineage>
</organism>
<reference key="1">
    <citation type="journal article" date="1993" name="Mol. Cell. Biol.">
        <title>Linear mitochondrial DNAs of yeasts: frequency of occurrence and general features.</title>
        <authorList>
            <person name="Fukuhara H."/>
            <person name="Sor F."/>
            <person name="Drissi R."/>
            <person name="Dinouel N."/>
            <person name="Miyakawa I."/>
            <person name="Rousset S."/>
            <person name="Viola A.M."/>
        </authorList>
    </citation>
    <scope>NUCLEOTIDE SEQUENCE [GENOMIC DNA]</scope>
    <source>
        <strain>CBS 2887</strain>
    </source>
</reference>